<gene>
    <name type="primary">lsrD</name>
    <name type="ordered locus">STM4076</name>
</gene>
<organism>
    <name type="scientific">Salmonella typhimurium (strain LT2 / SGSC1412 / ATCC 700720)</name>
    <dbReference type="NCBI Taxonomy" id="99287"/>
    <lineage>
        <taxon>Bacteria</taxon>
        <taxon>Pseudomonadati</taxon>
        <taxon>Pseudomonadota</taxon>
        <taxon>Gammaproteobacteria</taxon>
        <taxon>Enterobacterales</taxon>
        <taxon>Enterobacteriaceae</taxon>
        <taxon>Salmonella</taxon>
    </lineage>
</organism>
<protein>
    <recommendedName>
        <fullName>Autoinducer 2 import system permease protein LsrD</fullName>
        <shortName>AI-2 import system permease protein LsrD</shortName>
    </recommendedName>
</protein>
<sequence length="332" mass="35133">MNPWRRYSWEIALAALLIFEILAFGLINPRLLDINVLLFSTSDFICIGIVALPLTMVIVSGGMDISFGSTIGLCAITLGVLFQLGMPLPLAIIITLLLGAICGLINAGLIIYTGVNPLVITLGTMYLFGGSALLLSGMAGATGYEGIGGFPTAFTDFANISFLGIPMPLIFFLVCCLFFWLLMHRTHMGRNVFLIGQSARVAQYSAIPVNRTLYTVYAMTGCASAIAAVLLVSYFGSARSDLGASFLMPAITAVVLGGANIYGGSGSIMGSALAALLVGFLQQGLQMAGVPNQISSALSGALLIVVVVGRSVSLHRHQILEWYSRRRNAHQA</sequence>
<name>LSRD_SALTY</name>
<dbReference type="EMBL" id="AE006468">
    <property type="protein sequence ID" value="AAL22916.1"/>
    <property type="status" value="ALT_INIT"/>
    <property type="molecule type" value="Genomic_DNA"/>
</dbReference>
<dbReference type="STRING" id="99287.STM4076"/>
<dbReference type="PaxDb" id="99287-STM4076"/>
<dbReference type="KEGG" id="stm:STM4076"/>
<dbReference type="PATRIC" id="fig|99287.12.peg.4296"/>
<dbReference type="HOGENOM" id="CLU_028880_0_0_6"/>
<dbReference type="OMA" id="NTVVFQF"/>
<dbReference type="PhylomeDB" id="Q8ZKQ2"/>
<dbReference type="Proteomes" id="UP000001014">
    <property type="component" value="Chromosome"/>
</dbReference>
<dbReference type="GO" id="GO:0005886">
    <property type="term" value="C:plasma membrane"/>
    <property type="evidence" value="ECO:0000318"/>
    <property type="project" value="GO_Central"/>
</dbReference>
<dbReference type="GO" id="GO:0022857">
    <property type="term" value="F:transmembrane transporter activity"/>
    <property type="evidence" value="ECO:0007669"/>
    <property type="project" value="InterPro"/>
</dbReference>
<dbReference type="CDD" id="cd06579">
    <property type="entry name" value="TM_PBP1_transp_AraH_like"/>
    <property type="match status" value="1"/>
</dbReference>
<dbReference type="InterPro" id="IPR001851">
    <property type="entry name" value="ABC_transp_permease"/>
</dbReference>
<dbReference type="NCBIfam" id="NF011612">
    <property type="entry name" value="PRK15038.1"/>
    <property type="match status" value="1"/>
</dbReference>
<dbReference type="PANTHER" id="PTHR32196">
    <property type="entry name" value="ABC TRANSPORTER PERMEASE PROTEIN YPHD-RELATED-RELATED"/>
    <property type="match status" value="1"/>
</dbReference>
<dbReference type="PANTHER" id="PTHR32196:SF71">
    <property type="entry name" value="AUTOINDUCER 2 IMPORT SYSTEM PERMEASE PROTEIN LSRD"/>
    <property type="match status" value="1"/>
</dbReference>
<dbReference type="Pfam" id="PF02653">
    <property type="entry name" value="BPD_transp_2"/>
    <property type="match status" value="1"/>
</dbReference>
<evidence type="ECO:0000250" key="1"/>
<evidence type="ECO:0000255" key="2"/>
<evidence type="ECO:0000269" key="3">
    <source>
    </source>
</evidence>
<evidence type="ECO:0000305" key="4"/>
<evidence type="ECO:0000305" key="5">
    <source>
    </source>
</evidence>
<reference key="1">
    <citation type="journal article" date="2001" name="Nature">
        <title>Complete genome sequence of Salmonella enterica serovar Typhimurium LT2.</title>
        <authorList>
            <person name="McClelland M."/>
            <person name="Sanderson K.E."/>
            <person name="Spieth J."/>
            <person name="Clifton S.W."/>
            <person name="Latreille P."/>
            <person name="Courtney L."/>
            <person name="Porwollik S."/>
            <person name="Ali J."/>
            <person name="Dante M."/>
            <person name="Du F."/>
            <person name="Hou S."/>
            <person name="Layman D."/>
            <person name="Leonard S."/>
            <person name="Nguyen C."/>
            <person name="Scott K."/>
            <person name="Holmes A."/>
            <person name="Grewal N."/>
            <person name="Mulvaney E."/>
            <person name="Ryan E."/>
            <person name="Sun H."/>
            <person name="Florea L."/>
            <person name="Miller W."/>
            <person name="Stoneking T."/>
            <person name="Nhan M."/>
            <person name="Waterston R."/>
            <person name="Wilson R.K."/>
        </authorList>
    </citation>
    <scope>NUCLEOTIDE SEQUENCE [LARGE SCALE GENOMIC DNA]</scope>
    <source>
        <strain>LT2 / SGSC1412 / ATCC 700720</strain>
    </source>
</reference>
<reference key="2">
    <citation type="journal article" date="2001" name="Mol. Microbiol.">
        <title>The LuxS-dependent autoinducer AI-2 controls the expression of an ABC transporter that functions in AI-2 uptake in Salmonella typhimurium.</title>
        <authorList>
            <person name="Taga M.E."/>
            <person name="Semmelhack J.L."/>
            <person name="Bassler B.L."/>
        </authorList>
    </citation>
    <scope>FUNCTION IN AI-2 IMPORT</scope>
    <scope>INDUCTION</scope>
    <source>
        <strain>ATCC 14028 / SGSG 2980 / CDC 6516-60 / NCTC 12023</strain>
    </source>
</reference>
<feature type="chain" id="PRO_0000351377" description="Autoinducer 2 import system permease protein LsrD">
    <location>
        <begin position="1"/>
        <end position="332"/>
    </location>
</feature>
<feature type="transmembrane region" description="Helical" evidence="2">
    <location>
        <begin position="7"/>
        <end position="27"/>
    </location>
</feature>
<feature type="transmembrane region" description="Helical" evidence="2">
    <location>
        <begin position="45"/>
        <end position="65"/>
    </location>
</feature>
<feature type="transmembrane region" description="Helical" evidence="2">
    <location>
        <begin position="70"/>
        <end position="90"/>
    </location>
</feature>
<feature type="transmembrane region" description="Helical" evidence="2">
    <location>
        <begin position="91"/>
        <end position="111"/>
    </location>
</feature>
<feature type="transmembrane region" description="Helical" evidence="2">
    <location>
        <begin position="118"/>
        <end position="138"/>
    </location>
</feature>
<feature type="transmembrane region" description="Helical" evidence="2">
    <location>
        <begin position="162"/>
        <end position="182"/>
    </location>
</feature>
<feature type="transmembrane region" description="Helical" evidence="2">
    <location>
        <begin position="216"/>
        <end position="236"/>
    </location>
</feature>
<feature type="transmembrane region" description="Helical" evidence="2">
    <location>
        <begin position="240"/>
        <end position="260"/>
    </location>
</feature>
<feature type="transmembrane region" description="Helical" evidence="2">
    <location>
        <begin position="261"/>
        <end position="281"/>
    </location>
</feature>
<feature type="transmembrane region" description="Helical" evidence="2">
    <location>
        <begin position="288"/>
        <end position="308"/>
    </location>
</feature>
<keyword id="KW-0997">Cell inner membrane</keyword>
<keyword id="KW-1003">Cell membrane</keyword>
<keyword id="KW-0472">Membrane</keyword>
<keyword id="KW-1185">Reference proteome</keyword>
<keyword id="KW-0812">Transmembrane</keyword>
<keyword id="KW-1133">Transmembrane helix</keyword>
<keyword id="KW-0813">Transport</keyword>
<accession>Q8ZKQ2</accession>
<comment type="function">
    <text evidence="5">Part of the ABC transporter complex LsrABCD involved in autoinducer 2 (AI-2) import. Probably responsible for the translocation of the substrate across the membrane (Probable).</text>
</comment>
<comment type="subunit">
    <text evidence="4">The complex is composed of two ATP-binding proteins (LsrA), two transmembrane proteins (LsrC and LsrD) and a solute-binding protein (LsrB).</text>
</comment>
<comment type="subcellular location">
    <subcellularLocation>
        <location evidence="1">Cell inner membrane</location>
        <topology evidence="1">Multi-pass membrane protein</topology>
    </subcellularLocation>
</comment>
<comment type="induction">
    <text evidence="3">In the absence of AI-2, repressed by LsrR. Induced by AI-2, via release of the LsrR repressor.</text>
</comment>
<comment type="similarity">
    <text evidence="4">Belongs to the binding-protein-dependent transport system permease family. AraH/RbsC subfamily.</text>
</comment>
<comment type="sequence caution" evidence="4">
    <conflict type="erroneous initiation">
        <sequence resource="EMBL-CDS" id="AAL22916"/>
    </conflict>
</comment>
<proteinExistence type="evidence at protein level"/>